<protein>
    <recommendedName>
        <fullName>Flagellin B5</fullName>
    </recommendedName>
</protein>
<sequence length="275" mass="30019">MRRGAIGIGTLIVFIAMVLVAAVAAGVLISTSGYLQQKAMSAGRQTTQEVASGIKVLNVYGYINGSTPGAHNITRLVLYVSPNAGSGGIDLAHVKVVISDGKRMAVYRYYDPNEDKNSDIQPAYIHYTGDIANVFAYEKWEPYYKGKYPTGFDPNNKFYITDNIDISAVWWNLYSAYNKTSNNDKDYGKLLFGIAVVQDGDESLDSENHPSLSWGDIAAIMLWTFPFDDNNNPIDGFGLPPSTKVTGKVIPENGAGGVIDFTTPSTYTDNILELQ</sequence>
<evidence type="ECO:0000250" key="1"/>
<evidence type="ECO:0000305" key="2"/>
<reference key="1">
    <citation type="journal article" date="1999" name="FEMS Microbiol. Lett.">
        <title>Sequence and transcriptional studies of five clustered flagellin genes from hyperthermophilic archaeon Pyrococcus kodakaraensis KOD1.</title>
        <authorList>
            <person name="Nagahisa K."/>
            <person name="Ezaki S."/>
            <person name="Fujiwara S."/>
            <person name="Imanaka T."/>
            <person name="Takagi M."/>
        </authorList>
    </citation>
    <scope>NUCLEOTIDE SEQUENCE [GENOMIC DNA]</scope>
    <source>
        <strain>ATCC BAA-918 / JCM 12380 / KOD1</strain>
    </source>
</reference>
<reference key="2">
    <citation type="journal article" date="2005" name="Genome Res.">
        <title>Complete genome sequence of the hyperthermophilic archaeon Thermococcus kodakaraensis KOD1 and comparison with Pyrococcus genomes.</title>
        <authorList>
            <person name="Fukui T."/>
            <person name="Atomi H."/>
            <person name="Kanai T."/>
            <person name="Matsumi R."/>
            <person name="Fujiwara S."/>
            <person name="Imanaka T."/>
        </authorList>
    </citation>
    <scope>NUCLEOTIDE SEQUENCE [LARGE SCALE GENOMIC DNA]</scope>
    <source>
        <strain>ATCC BAA-918 / JCM 12380 / KOD1</strain>
    </source>
</reference>
<proteinExistence type="inferred from homology"/>
<dbReference type="EMBL" id="AB018434">
    <property type="protein sequence ID" value="BAA84109.1"/>
    <property type="molecule type" value="Genomic_DNA"/>
</dbReference>
<dbReference type="EMBL" id="AP006878">
    <property type="protein sequence ID" value="BAD84231.1"/>
    <property type="molecule type" value="Genomic_DNA"/>
</dbReference>
<dbReference type="RefSeq" id="WP_011248997.1">
    <property type="nucleotide sequence ID" value="NC_006624.1"/>
</dbReference>
<dbReference type="SMR" id="Q9V2W7"/>
<dbReference type="STRING" id="69014.TK0042"/>
<dbReference type="EnsemblBacteria" id="BAD84231">
    <property type="protein sequence ID" value="BAD84231"/>
    <property type="gene ID" value="TK0042"/>
</dbReference>
<dbReference type="GeneID" id="78446544"/>
<dbReference type="KEGG" id="tko:TK0042"/>
<dbReference type="PATRIC" id="fig|69014.16.peg.42"/>
<dbReference type="eggNOG" id="arCOG01829">
    <property type="taxonomic scope" value="Archaea"/>
</dbReference>
<dbReference type="HOGENOM" id="CLU_051124_0_1_2"/>
<dbReference type="InParanoid" id="Q9V2W7"/>
<dbReference type="OrthoDB" id="102632at2157"/>
<dbReference type="PhylomeDB" id="Q9V2W7"/>
<dbReference type="Proteomes" id="UP000000536">
    <property type="component" value="Chromosome"/>
</dbReference>
<dbReference type="GO" id="GO:0097589">
    <property type="term" value="C:archaeal-type flagellum"/>
    <property type="evidence" value="ECO:0007669"/>
    <property type="project" value="UniProtKB-SubCell"/>
</dbReference>
<dbReference type="GO" id="GO:0005198">
    <property type="term" value="F:structural molecule activity"/>
    <property type="evidence" value="ECO:0007669"/>
    <property type="project" value="InterPro"/>
</dbReference>
<dbReference type="GO" id="GO:0097588">
    <property type="term" value="P:archaeal or bacterial-type flagellum-dependent cell motility"/>
    <property type="evidence" value="ECO:0007669"/>
    <property type="project" value="InterPro"/>
</dbReference>
<dbReference type="InterPro" id="IPR013373">
    <property type="entry name" value="Flagellin/pilin_N_arc"/>
</dbReference>
<dbReference type="InterPro" id="IPR002774">
    <property type="entry name" value="Flagellin_arc"/>
</dbReference>
<dbReference type="NCBIfam" id="TIGR02537">
    <property type="entry name" value="arch_flag_Nterm"/>
    <property type="match status" value="1"/>
</dbReference>
<dbReference type="NCBIfam" id="NF006325">
    <property type="entry name" value="PRK08541.1"/>
    <property type="match status" value="1"/>
</dbReference>
<dbReference type="PANTHER" id="PTHR35903">
    <property type="entry name" value="FLAGELLIN B1"/>
    <property type="match status" value="1"/>
</dbReference>
<dbReference type="PANTHER" id="PTHR35903:SF1">
    <property type="entry name" value="FLAGELLIN B1"/>
    <property type="match status" value="1"/>
</dbReference>
<dbReference type="Pfam" id="PF01917">
    <property type="entry name" value="Arch_flagellin"/>
    <property type="match status" value="1"/>
</dbReference>
<gene>
    <name type="primary">flaB5</name>
    <name type="ordered locus">TK0042</name>
</gene>
<keyword id="KW-0974">Archaeal flagellum</keyword>
<keyword id="KW-1185">Reference proteome</keyword>
<accession>Q9V2W7</accession>
<organism>
    <name type="scientific">Thermococcus kodakarensis (strain ATCC BAA-918 / JCM 12380 / KOD1)</name>
    <name type="common">Pyrococcus kodakaraensis (strain KOD1)</name>
    <dbReference type="NCBI Taxonomy" id="69014"/>
    <lineage>
        <taxon>Archaea</taxon>
        <taxon>Methanobacteriati</taxon>
        <taxon>Methanobacteriota</taxon>
        <taxon>Thermococci</taxon>
        <taxon>Thermococcales</taxon>
        <taxon>Thermococcaceae</taxon>
        <taxon>Thermococcus</taxon>
    </lineage>
</organism>
<comment type="function">
    <text>Flagellin is the subunit protein which polymerizes to form the filaments of archaeal flagella.</text>
</comment>
<comment type="subcellular location">
    <subcellularLocation>
        <location>Archaeal flagellum</location>
    </subcellularLocation>
</comment>
<comment type="similarity">
    <text evidence="2">Belongs to the archaeal flagellin family.</text>
</comment>
<name>FLAB5_THEKO</name>
<feature type="propeptide" id="PRO_0000009417" evidence="1">
    <location>
        <begin position="1"/>
        <end position="4"/>
    </location>
</feature>
<feature type="chain" id="PRO_0000009418" description="Flagellin B5">
    <location>
        <begin position="5"/>
        <end position="275"/>
    </location>
</feature>